<name>PPM1N_MOUSE</name>
<comment type="catalytic activity">
    <reaction>
        <text>O-phospho-L-seryl-[protein] + H2O = L-seryl-[protein] + phosphate</text>
        <dbReference type="Rhea" id="RHEA:20629"/>
        <dbReference type="Rhea" id="RHEA-COMP:9863"/>
        <dbReference type="Rhea" id="RHEA-COMP:11604"/>
        <dbReference type="ChEBI" id="CHEBI:15377"/>
        <dbReference type="ChEBI" id="CHEBI:29999"/>
        <dbReference type="ChEBI" id="CHEBI:43474"/>
        <dbReference type="ChEBI" id="CHEBI:83421"/>
        <dbReference type="EC" id="3.1.3.16"/>
    </reaction>
</comment>
<comment type="catalytic activity">
    <reaction>
        <text>O-phospho-L-threonyl-[protein] + H2O = L-threonyl-[protein] + phosphate</text>
        <dbReference type="Rhea" id="RHEA:47004"/>
        <dbReference type="Rhea" id="RHEA-COMP:11060"/>
        <dbReference type="Rhea" id="RHEA-COMP:11605"/>
        <dbReference type="ChEBI" id="CHEBI:15377"/>
        <dbReference type="ChEBI" id="CHEBI:30013"/>
        <dbReference type="ChEBI" id="CHEBI:43474"/>
        <dbReference type="ChEBI" id="CHEBI:61977"/>
        <dbReference type="EC" id="3.1.3.16"/>
    </reaction>
</comment>
<comment type="cofactor">
    <cofactor evidence="1">
        <name>Mg(2+)</name>
        <dbReference type="ChEBI" id="CHEBI:18420"/>
    </cofactor>
    <cofactor evidence="1">
        <name>Mn(2+)</name>
        <dbReference type="ChEBI" id="CHEBI:29035"/>
    </cofactor>
    <text evidence="1">Binds 2 magnesium or manganese ions per subunit.</text>
</comment>
<comment type="similarity">
    <text evidence="3">Belongs to the PP2C family.</text>
</comment>
<proteinExistence type="evidence at transcript level"/>
<accession>Q8BGL1</accession>
<feature type="chain" id="PRO_0000349232" description="Probable protein phosphatase 1N">
    <location>
        <begin position="1"/>
        <end position="404"/>
    </location>
</feature>
<feature type="domain" description="PPM-type phosphatase" evidence="2">
    <location>
        <begin position="59"/>
        <end position="319"/>
    </location>
</feature>
<feature type="binding site" evidence="1">
    <location>
        <position position="96"/>
    </location>
    <ligand>
        <name>Mn(2+)</name>
        <dbReference type="ChEBI" id="CHEBI:29035"/>
        <label>1</label>
    </ligand>
</feature>
<feature type="binding site" evidence="1">
    <location>
        <position position="96"/>
    </location>
    <ligand>
        <name>Mn(2+)</name>
        <dbReference type="ChEBI" id="CHEBI:29035"/>
        <label>2</label>
    </ligand>
</feature>
<feature type="binding site" evidence="1">
    <location>
        <position position="97"/>
    </location>
    <ligand>
        <name>Mn(2+)</name>
        <dbReference type="ChEBI" id="CHEBI:29035"/>
        <label>1</label>
    </ligand>
</feature>
<feature type="binding site" evidence="1">
    <location>
        <position position="267"/>
    </location>
    <ligand>
        <name>Mn(2+)</name>
        <dbReference type="ChEBI" id="CHEBI:29035"/>
        <label>2</label>
    </ligand>
</feature>
<feature type="binding site" evidence="1">
    <location>
        <position position="310"/>
    </location>
    <ligand>
        <name>Mn(2+)</name>
        <dbReference type="ChEBI" id="CHEBI:29035"/>
        <label>2</label>
    </ligand>
</feature>
<reference key="1">
    <citation type="journal article" date="2005" name="Science">
        <title>The transcriptional landscape of the mammalian genome.</title>
        <authorList>
            <person name="Carninci P."/>
            <person name="Kasukawa T."/>
            <person name="Katayama S."/>
            <person name="Gough J."/>
            <person name="Frith M.C."/>
            <person name="Maeda N."/>
            <person name="Oyama R."/>
            <person name="Ravasi T."/>
            <person name="Lenhard B."/>
            <person name="Wells C."/>
            <person name="Kodzius R."/>
            <person name="Shimokawa K."/>
            <person name="Bajic V.B."/>
            <person name="Brenner S.E."/>
            <person name="Batalov S."/>
            <person name="Forrest A.R."/>
            <person name="Zavolan M."/>
            <person name="Davis M.J."/>
            <person name="Wilming L.G."/>
            <person name="Aidinis V."/>
            <person name="Allen J.E."/>
            <person name="Ambesi-Impiombato A."/>
            <person name="Apweiler R."/>
            <person name="Aturaliya R.N."/>
            <person name="Bailey T.L."/>
            <person name="Bansal M."/>
            <person name="Baxter L."/>
            <person name="Beisel K.W."/>
            <person name="Bersano T."/>
            <person name="Bono H."/>
            <person name="Chalk A.M."/>
            <person name="Chiu K.P."/>
            <person name="Choudhary V."/>
            <person name="Christoffels A."/>
            <person name="Clutterbuck D.R."/>
            <person name="Crowe M.L."/>
            <person name="Dalla E."/>
            <person name="Dalrymple B.P."/>
            <person name="de Bono B."/>
            <person name="Della Gatta G."/>
            <person name="di Bernardo D."/>
            <person name="Down T."/>
            <person name="Engstrom P."/>
            <person name="Fagiolini M."/>
            <person name="Faulkner G."/>
            <person name="Fletcher C.F."/>
            <person name="Fukushima T."/>
            <person name="Furuno M."/>
            <person name="Futaki S."/>
            <person name="Gariboldi M."/>
            <person name="Georgii-Hemming P."/>
            <person name="Gingeras T.R."/>
            <person name="Gojobori T."/>
            <person name="Green R.E."/>
            <person name="Gustincich S."/>
            <person name="Harbers M."/>
            <person name="Hayashi Y."/>
            <person name="Hensch T.K."/>
            <person name="Hirokawa N."/>
            <person name="Hill D."/>
            <person name="Huminiecki L."/>
            <person name="Iacono M."/>
            <person name="Ikeo K."/>
            <person name="Iwama A."/>
            <person name="Ishikawa T."/>
            <person name="Jakt M."/>
            <person name="Kanapin A."/>
            <person name="Katoh M."/>
            <person name="Kawasawa Y."/>
            <person name="Kelso J."/>
            <person name="Kitamura H."/>
            <person name="Kitano H."/>
            <person name="Kollias G."/>
            <person name="Krishnan S.P."/>
            <person name="Kruger A."/>
            <person name="Kummerfeld S.K."/>
            <person name="Kurochkin I.V."/>
            <person name="Lareau L.F."/>
            <person name="Lazarevic D."/>
            <person name="Lipovich L."/>
            <person name="Liu J."/>
            <person name="Liuni S."/>
            <person name="McWilliam S."/>
            <person name="Madan Babu M."/>
            <person name="Madera M."/>
            <person name="Marchionni L."/>
            <person name="Matsuda H."/>
            <person name="Matsuzawa S."/>
            <person name="Miki H."/>
            <person name="Mignone F."/>
            <person name="Miyake S."/>
            <person name="Morris K."/>
            <person name="Mottagui-Tabar S."/>
            <person name="Mulder N."/>
            <person name="Nakano N."/>
            <person name="Nakauchi H."/>
            <person name="Ng P."/>
            <person name="Nilsson R."/>
            <person name="Nishiguchi S."/>
            <person name="Nishikawa S."/>
            <person name="Nori F."/>
            <person name="Ohara O."/>
            <person name="Okazaki Y."/>
            <person name="Orlando V."/>
            <person name="Pang K.C."/>
            <person name="Pavan W.J."/>
            <person name="Pavesi G."/>
            <person name="Pesole G."/>
            <person name="Petrovsky N."/>
            <person name="Piazza S."/>
            <person name="Reed J."/>
            <person name="Reid J.F."/>
            <person name="Ring B.Z."/>
            <person name="Ringwald M."/>
            <person name="Rost B."/>
            <person name="Ruan Y."/>
            <person name="Salzberg S.L."/>
            <person name="Sandelin A."/>
            <person name="Schneider C."/>
            <person name="Schoenbach C."/>
            <person name="Sekiguchi K."/>
            <person name="Semple C.A."/>
            <person name="Seno S."/>
            <person name="Sessa L."/>
            <person name="Sheng Y."/>
            <person name="Shibata Y."/>
            <person name="Shimada H."/>
            <person name="Shimada K."/>
            <person name="Silva D."/>
            <person name="Sinclair B."/>
            <person name="Sperling S."/>
            <person name="Stupka E."/>
            <person name="Sugiura K."/>
            <person name="Sultana R."/>
            <person name="Takenaka Y."/>
            <person name="Taki K."/>
            <person name="Tammoja K."/>
            <person name="Tan S.L."/>
            <person name="Tang S."/>
            <person name="Taylor M.S."/>
            <person name="Tegner J."/>
            <person name="Teichmann S.A."/>
            <person name="Ueda H.R."/>
            <person name="van Nimwegen E."/>
            <person name="Verardo R."/>
            <person name="Wei C.L."/>
            <person name="Yagi K."/>
            <person name="Yamanishi H."/>
            <person name="Zabarovsky E."/>
            <person name="Zhu S."/>
            <person name="Zimmer A."/>
            <person name="Hide W."/>
            <person name="Bult C."/>
            <person name="Grimmond S.M."/>
            <person name="Teasdale R.D."/>
            <person name="Liu E.T."/>
            <person name="Brusic V."/>
            <person name="Quackenbush J."/>
            <person name="Wahlestedt C."/>
            <person name="Mattick J.S."/>
            <person name="Hume D.A."/>
            <person name="Kai C."/>
            <person name="Sasaki D."/>
            <person name="Tomaru Y."/>
            <person name="Fukuda S."/>
            <person name="Kanamori-Katayama M."/>
            <person name="Suzuki M."/>
            <person name="Aoki J."/>
            <person name="Arakawa T."/>
            <person name="Iida J."/>
            <person name="Imamura K."/>
            <person name="Itoh M."/>
            <person name="Kato T."/>
            <person name="Kawaji H."/>
            <person name="Kawagashira N."/>
            <person name="Kawashima T."/>
            <person name="Kojima M."/>
            <person name="Kondo S."/>
            <person name="Konno H."/>
            <person name="Nakano K."/>
            <person name="Ninomiya N."/>
            <person name="Nishio T."/>
            <person name="Okada M."/>
            <person name="Plessy C."/>
            <person name="Shibata K."/>
            <person name="Shiraki T."/>
            <person name="Suzuki S."/>
            <person name="Tagami M."/>
            <person name="Waki K."/>
            <person name="Watahiki A."/>
            <person name="Okamura-Oho Y."/>
            <person name="Suzuki H."/>
            <person name="Kawai J."/>
            <person name="Hayashizaki Y."/>
        </authorList>
    </citation>
    <scope>NUCLEOTIDE SEQUENCE [LARGE SCALE MRNA]</scope>
    <source>
        <strain>C57BL/6J</strain>
        <tissue>Retina</tissue>
    </source>
</reference>
<reference key="2">
    <citation type="journal article" date="2004" name="Genome Res.">
        <title>The status, quality, and expansion of the NIH full-length cDNA project: the Mammalian Gene Collection (MGC).</title>
        <authorList>
            <consortium name="The MGC Project Team"/>
        </authorList>
    </citation>
    <scope>NUCLEOTIDE SEQUENCE [LARGE SCALE MRNA]</scope>
    <source>
        <tissue>Eye</tissue>
    </source>
</reference>
<protein>
    <recommendedName>
        <fullName>Probable protein phosphatase 1N</fullName>
        <ecNumber>3.1.3.16</ecNumber>
    </recommendedName>
</protein>
<evidence type="ECO:0000250" key="1"/>
<evidence type="ECO:0000255" key="2">
    <source>
        <dbReference type="PROSITE-ProRule" id="PRU01082"/>
    </source>
</evidence>
<evidence type="ECO:0000305" key="3"/>
<sequence>MAAFVRLLERLGWAARAQQVVEQEVEEECSVPGASGSLLAAPRCWQRLHRGAAATSGLRFGASAVQGWRARMEDAHCARLALPGLPSGWAFFAVLDGHGGARAARFGARHLPGYVLGELGPAPQEPDGVRQALRSAFLQADAQLSALWPRGDPGGSTAVALLVSPRFLYLAHCGDSRALLSRSGSVAFCTEDHRPHRPRERERIHDAGGTVRRRRVEGSLAVSRALGDFAYKQAPGRPPELQLVSAEPEVAALARQDEDEFVLLASDGVWDALSGADLAGLVTSRLRLGLDLELLCAQLLDTCLCKGSLDNMTCMVVCFPGAPRPCEEAISKEMALDEALSHKVAELYASAQEPPGLNTVFRTLASEDIPGLPPGGGLHSKAAVIAEAYSKLHQTPGECQEEEW</sequence>
<gene>
    <name type="primary">Ppm1n</name>
</gene>
<dbReference type="EC" id="3.1.3.16"/>
<dbReference type="EMBL" id="AK044232">
    <property type="protein sequence ID" value="BAC31831.1"/>
    <property type="molecule type" value="mRNA"/>
</dbReference>
<dbReference type="EMBL" id="AK044334">
    <property type="protein sequence ID" value="BAC31872.1"/>
    <property type="molecule type" value="mRNA"/>
</dbReference>
<dbReference type="EMBL" id="BC096372">
    <property type="protein sequence ID" value="AAH96372.1"/>
    <property type="molecule type" value="mRNA"/>
</dbReference>
<dbReference type="CCDS" id="CCDS20895.1"/>
<dbReference type="RefSeq" id="NP_808359.1">
    <property type="nucleotide sequence ID" value="NM_177691.3"/>
</dbReference>
<dbReference type="SMR" id="Q8BGL1"/>
<dbReference type="FunCoup" id="Q8BGL1">
    <property type="interactions" value="48"/>
</dbReference>
<dbReference type="STRING" id="10090.ENSMUSP00000032560"/>
<dbReference type="PaxDb" id="10090-ENSMUSP00000032560"/>
<dbReference type="ProteomicsDB" id="291718"/>
<dbReference type="Antibodypedia" id="31351">
    <property type="antibodies" value="10 antibodies from 6 providers"/>
</dbReference>
<dbReference type="DNASU" id="232941"/>
<dbReference type="Ensembl" id="ENSMUST00000032560.6">
    <property type="protein sequence ID" value="ENSMUSP00000032560.5"/>
    <property type="gene ID" value="ENSMUSG00000030402.6"/>
</dbReference>
<dbReference type="GeneID" id="232941"/>
<dbReference type="KEGG" id="mmu:232941"/>
<dbReference type="UCSC" id="uc009flg.1">
    <property type="organism name" value="mouse"/>
</dbReference>
<dbReference type="AGR" id="MGI:2142330"/>
<dbReference type="CTD" id="147699"/>
<dbReference type="MGI" id="MGI:2142330">
    <property type="gene designation" value="Ppm1n"/>
</dbReference>
<dbReference type="VEuPathDB" id="HostDB:ENSMUSG00000030402"/>
<dbReference type="eggNOG" id="KOG0697">
    <property type="taxonomic scope" value="Eukaryota"/>
</dbReference>
<dbReference type="GeneTree" id="ENSGT00940000162694"/>
<dbReference type="HOGENOM" id="CLU_013173_4_0_1"/>
<dbReference type="InParanoid" id="Q8BGL1"/>
<dbReference type="OMA" id="LWTACKK"/>
<dbReference type="OrthoDB" id="10264738at2759"/>
<dbReference type="PhylomeDB" id="Q8BGL1"/>
<dbReference type="TreeFam" id="TF313590"/>
<dbReference type="BioGRID-ORCS" id="232941">
    <property type="hits" value="4 hits in 77 CRISPR screens"/>
</dbReference>
<dbReference type="ChiTaRS" id="Ppm1n">
    <property type="organism name" value="mouse"/>
</dbReference>
<dbReference type="PRO" id="PR:Q8BGL1"/>
<dbReference type="Proteomes" id="UP000000589">
    <property type="component" value="Chromosome 7"/>
</dbReference>
<dbReference type="RNAct" id="Q8BGL1">
    <property type="molecule type" value="protein"/>
</dbReference>
<dbReference type="Bgee" id="ENSMUSG00000030402">
    <property type="expression patterns" value="Expressed in retinal neural layer and 48 other cell types or tissues"/>
</dbReference>
<dbReference type="GO" id="GO:0000287">
    <property type="term" value="F:magnesium ion binding"/>
    <property type="evidence" value="ECO:0007669"/>
    <property type="project" value="InterPro"/>
</dbReference>
<dbReference type="GO" id="GO:0030145">
    <property type="term" value="F:manganese ion binding"/>
    <property type="evidence" value="ECO:0007669"/>
    <property type="project" value="InterPro"/>
</dbReference>
<dbReference type="GO" id="GO:0004722">
    <property type="term" value="F:protein serine/threonine phosphatase activity"/>
    <property type="evidence" value="ECO:0007669"/>
    <property type="project" value="UniProtKB-EC"/>
</dbReference>
<dbReference type="CDD" id="cd00143">
    <property type="entry name" value="PP2Cc"/>
    <property type="match status" value="1"/>
</dbReference>
<dbReference type="FunFam" id="3.60.40.10:FF:000048">
    <property type="entry name" value="probable protein phosphatase 1N isoform X1"/>
    <property type="match status" value="1"/>
</dbReference>
<dbReference type="FunFam" id="1.10.10.430:FF:000003">
    <property type="entry name" value="probable protein phosphatase 1N isoform X2"/>
    <property type="match status" value="1"/>
</dbReference>
<dbReference type="Gene3D" id="1.10.10.430">
    <property type="entry name" value="Phosphatase 2C, C-terminal domain suprefamily"/>
    <property type="match status" value="1"/>
</dbReference>
<dbReference type="Gene3D" id="3.60.40.10">
    <property type="entry name" value="PPM-type phosphatase domain"/>
    <property type="match status" value="1"/>
</dbReference>
<dbReference type="InterPro" id="IPR015655">
    <property type="entry name" value="PP2C"/>
</dbReference>
<dbReference type="InterPro" id="IPR012911">
    <property type="entry name" value="PP2C_C"/>
</dbReference>
<dbReference type="InterPro" id="IPR036580">
    <property type="entry name" value="PP2C_C_sf"/>
</dbReference>
<dbReference type="InterPro" id="IPR036457">
    <property type="entry name" value="PPM-type-like_dom_sf"/>
</dbReference>
<dbReference type="InterPro" id="IPR001932">
    <property type="entry name" value="PPM-type_phosphatase-like_dom"/>
</dbReference>
<dbReference type="PANTHER" id="PTHR47992">
    <property type="entry name" value="PROTEIN PHOSPHATASE"/>
    <property type="match status" value="1"/>
</dbReference>
<dbReference type="Pfam" id="PF00481">
    <property type="entry name" value="PP2C"/>
    <property type="match status" value="1"/>
</dbReference>
<dbReference type="Pfam" id="PF07830">
    <property type="entry name" value="PP2C_C"/>
    <property type="match status" value="1"/>
</dbReference>
<dbReference type="SMART" id="SM00332">
    <property type="entry name" value="PP2Cc"/>
    <property type="match status" value="1"/>
</dbReference>
<dbReference type="SUPFAM" id="SSF81606">
    <property type="entry name" value="PP2C-like"/>
    <property type="match status" value="1"/>
</dbReference>
<dbReference type="SUPFAM" id="SSF81601">
    <property type="entry name" value="Protein serine/threonine phosphatase 2C, C-terminal domain"/>
    <property type="match status" value="1"/>
</dbReference>
<dbReference type="PROSITE" id="PS51746">
    <property type="entry name" value="PPM_2"/>
    <property type="match status" value="1"/>
</dbReference>
<organism>
    <name type="scientific">Mus musculus</name>
    <name type="common">Mouse</name>
    <dbReference type="NCBI Taxonomy" id="10090"/>
    <lineage>
        <taxon>Eukaryota</taxon>
        <taxon>Metazoa</taxon>
        <taxon>Chordata</taxon>
        <taxon>Craniata</taxon>
        <taxon>Vertebrata</taxon>
        <taxon>Euteleostomi</taxon>
        <taxon>Mammalia</taxon>
        <taxon>Eutheria</taxon>
        <taxon>Euarchontoglires</taxon>
        <taxon>Glires</taxon>
        <taxon>Rodentia</taxon>
        <taxon>Myomorpha</taxon>
        <taxon>Muroidea</taxon>
        <taxon>Muridae</taxon>
        <taxon>Murinae</taxon>
        <taxon>Mus</taxon>
        <taxon>Mus</taxon>
    </lineage>
</organism>
<keyword id="KW-0378">Hydrolase</keyword>
<keyword id="KW-0460">Magnesium</keyword>
<keyword id="KW-0464">Manganese</keyword>
<keyword id="KW-0479">Metal-binding</keyword>
<keyword id="KW-0904">Protein phosphatase</keyword>
<keyword id="KW-1185">Reference proteome</keyword>